<organism>
    <name type="scientific">Methanococcus vannielii (strain ATCC 35089 / DSM 1224 / JCM 13029 / OCM 148 / SB)</name>
    <dbReference type="NCBI Taxonomy" id="406327"/>
    <lineage>
        <taxon>Archaea</taxon>
        <taxon>Methanobacteriati</taxon>
        <taxon>Methanobacteriota</taxon>
        <taxon>Methanomada group</taxon>
        <taxon>Methanococci</taxon>
        <taxon>Methanococcales</taxon>
        <taxon>Methanococcaceae</taxon>
        <taxon>Methanococcus</taxon>
    </lineage>
</organism>
<reference key="1">
    <citation type="submission" date="2007-06" db="EMBL/GenBank/DDBJ databases">
        <title>Complete sequence of Methanococcus vannielii SB.</title>
        <authorList>
            <consortium name="US DOE Joint Genome Institute"/>
            <person name="Copeland A."/>
            <person name="Lucas S."/>
            <person name="Lapidus A."/>
            <person name="Barry K."/>
            <person name="Glavina del Rio T."/>
            <person name="Dalin E."/>
            <person name="Tice H."/>
            <person name="Pitluck S."/>
            <person name="Chain P."/>
            <person name="Malfatti S."/>
            <person name="Shin M."/>
            <person name="Vergez L."/>
            <person name="Schmutz J."/>
            <person name="Larimer F."/>
            <person name="Land M."/>
            <person name="Hauser L."/>
            <person name="Kyrpides N."/>
            <person name="Anderson I."/>
            <person name="Sieprawska-Lupa M."/>
            <person name="Whitman W.B."/>
            <person name="Richardson P."/>
        </authorList>
    </citation>
    <scope>NUCLEOTIDE SEQUENCE [LARGE SCALE GENOMIC DNA]</scope>
    <source>
        <strain>ATCC 35089 / DSM 1224 / JCM 13029 / OCM 148 / SB</strain>
    </source>
</reference>
<feature type="chain" id="PRO_1000056071" description="Large ribosomal subunit protein uL30">
    <location>
        <begin position="1"/>
        <end position="154"/>
    </location>
</feature>
<accession>A6UQ65</accession>
<dbReference type="EMBL" id="CP000742">
    <property type="protein sequence ID" value="ABR54637.1"/>
    <property type="molecule type" value="Genomic_DNA"/>
</dbReference>
<dbReference type="RefSeq" id="WP_011972539.1">
    <property type="nucleotide sequence ID" value="NC_009634.1"/>
</dbReference>
<dbReference type="SMR" id="A6UQ65"/>
<dbReference type="STRING" id="406327.Mevan_0731"/>
<dbReference type="GeneID" id="5325894"/>
<dbReference type="KEGG" id="mvn:Mevan_0731"/>
<dbReference type="eggNOG" id="arCOG04086">
    <property type="taxonomic scope" value="Archaea"/>
</dbReference>
<dbReference type="HOGENOM" id="CLU_055156_6_0_2"/>
<dbReference type="OrthoDB" id="6379at2157"/>
<dbReference type="Proteomes" id="UP000001107">
    <property type="component" value="Chromosome"/>
</dbReference>
<dbReference type="GO" id="GO:0022625">
    <property type="term" value="C:cytosolic large ribosomal subunit"/>
    <property type="evidence" value="ECO:0007669"/>
    <property type="project" value="TreeGrafter"/>
</dbReference>
<dbReference type="GO" id="GO:0003723">
    <property type="term" value="F:RNA binding"/>
    <property type="evidence" value="ECO:0007669"/>
    <property type="project" value="TreeGrafter"/>
</dbReference>
<dbReference type="GO" id="GO:0003735">
    <property type="term" value="F:structural constituent of ribosome"/>
    <property type="evidence" value="ECO:0007669"/>
    <property type="project" value="InterPro"/>
</dbReference>
<dbReference type="GO" id="GO:0000463">
    <property type="term" value="P:maturation of LSU-rRNA from tricistronic rRNA transcript (SSU-rRNA, 5.8S rRNA, LSU-rRNA)"/>
    <property type="evidence" value="ECO:0007669"/>
    <property type="project" value="TreeGrafter"/>
</dbReference>
<dbReference type="GO" id="GO:0006412">
    <property type="term" value="P:translation"/>
    <property type="evidence" value="ECO:0007669"/>
    <property type="project" value="UniProtKB-UniRule"/>
</dbReference>
<dbReference type="CDD" id="cd01657">
    <property type="entry name" value="Ribosomal_L7_archeal_euk"/>
    <property type="match status" value="1"/>
</dbReference>
<dbReference type="Gene3D" id="1.10.15.30">
    <property type="match status" value="1"/>
</dbReference>
<dbReference type="Gene3D" id="3.30.1390.20">
    <property type="entry name" value="Ribosomal protein L30, ferredoxin-like fold domain"/>
    <property type="match status" value="1"/>
</dbReference>
<dbReference type="HAMAP" id="MF_01371_A">
    <property type="entry name" value="Ribosomal_uL30_A"/>
    <property type="match status" value="1"/>
</dbReference>
<dbReference type="InterPro" id="IPR036919">
    <property type="entry name" value="Ribo_uL30_ferredoxin-like_sf"/>
</dbReference>
<dbReference type="InterPro" id="IPR039699">
    <property type="entry name" value="Ribosomal_uL30"/>
</dbReference>
<dbReference type="InterPro" id="IPR005997">
    <property type="entry name" value="Ribosomal_uL30_arc"/>
</dbReference>
<dbReference type="InterPro" id="IPR018038">
    <property type="entry name" value="Ribosomal_uL30_CS"/>
</dbReference>
<dbReference type="InterPro" id="IPR035808">
    <property type="entry name" value="Ribosomal_uL30_euk_arc"/>
</dbReference>
<dbReference type="InterPro" id="IPR016082">
    <property type="entry name" value="Ribosomal_uL30_ferredoxin-like"/>
</dbReference>
<dbReference type="NCBIfam" id="NF004711">
    <property type="entry name" value="PRK06049.1"/>
    <property type="match status" value="1"/>
</dbReference>
<dbReference type="NCBIfam" id="TIGR01309">
    <property type="entry name" value="uL30_arch"/>
    <property type="match status" value="1"/>
</dbReference>
<dbReference type="PANTHER" id="PTHR11524">
    <property type="entry name" value="60S RIBOSOMAL PROTEIN L7"/>
    <property type="match status" value="1"/>
</dbReference>
<dbReference type="PANTHER" id="PTHR11524:SF16">
    <property type="entry name" value="LARGE RIBOSOMAL SUBUNIT PROTEIN UL30"/>
    <property type="match status" value="1"/>
</dbReference>
<dbReference type="Pfam" id="PF00327">
    <property type="entry name" value="Ribosomal_L30"/>
    <property type="match status" value="1"/>
</dbReference>
<dbReference type="SUPFAM" id="SSF55129">
    <property type="entry name" value="Ribosomal protein L30p/L7e"/>
    <property type="match status" value="1"/>
</dbReference>
<dbReference type="PROSITE" id="PS00634">
    <property type="entry name" value="RIBOSOMAL_L30"/>
    <property type="match status" value="1"/>
</dbReference>
<comment type="subunit">
    <text evidence="1">Part of the 50S ribosomal subunit.</text>
</comment>
<comment type="similarity">
    <text evidence="1">Belongs to the universal ribosomal protein uL30 family.</text>
</comment>
<name>RL30_METVS</name>
<proteinExistence type="inferred from homology"/>
<gene>
    <name evidence="1" type="primary">rpl30</name>
    <name type="ordered locus">Mevan_0731</name>
</gene>
<keyword id="KW-0687">Ribonucleoprotein</keyword>
<keyword id="KW-0689">Ribosomal protein</keyword>
<protein>
    <recommendedName>
        <fullName evidence="1">Large ribosomal subunit protein uL30</fullName>
    </recommendedName>
    <alternativeName>
        <fullName evidence="2">50S ribosomal protein L30</fullName>
    </alternativeName>
</protein>
<sequence>MAYAVVRVRGSVGVRGDIADTMKMLRLHRVNHCVVIPENDHYTGMIKKVKDYVTYGEIDKETLVSLILKRGRLAGNKRLSEELLKELVELPVDALAEKVLAGEIKLKDTPIKPVFRLHPPRRGYDRGGIKKGFSIGGALGYRAGKINDLLNKMM</sequence>
<evidence type="ECO:0000255" key="1">
    <source>
        <dbReference type="HAMAP-Rule" id="MF_01371"/>
    </source>
</evidence>
<evidence type="ECO:0000305" key="2"/>